<comment type="function">
    <text evidence="1">May regulate the activity of kinases.</text>
</comment>
<comment type="similarity">
    <text evidence="2">Belongs to the MOB1/phocein family.</text>
</comment>
<accession>Q8BJG4</accession>
<accession>Q3UFI6</accession>
<evidence type="ECO:0000250" key="1"/>
<evidence type="ECO:0000305" key="2"/>
<keyword id="KW-0479">Metal-binding</keyword>
<keyword id="KW-1185">Reference proteome</keyword>
<keyword id="KW-0862">Zinc</keyword>
<proteinExistence type="evidence at transcript level"/>
<reference key="1">
    <citation type="journal article" date="2005" name="Science">
        <title>The transcriptional landscape of the mammalian genome.</title>
        <authorList>
            <person name="Carninci P."/>
            <person name="Kasukawa T."/>
            <person name="Katayama S."/>
            <person name="Gough J."/>
            <person name="Frith M.C."/>
            <person name="Maeda N."/>
            <person name="Oyama R."/>
            <person name="Ravasi T."/>
            <person name="Lenhard B."/>
            <person name="Wells C."/>
            <person name="Kodzius R."/>
            <person name="Shimokawa K."/>
            <person name="Bajic V.B."/>
            <person name="Brenner S.E."/>
            <person name="Batalov S."/>
            <person name="Forrest A.R."/>
            <person name="Zavolan M."/>
            <person name="Davis M.J."/>
            <person name="Wilming L.G."/>
            <person name="Aidinis V."/>
            <person name="Allen J.E."/>
            <person name="Ambesi-Impiombato A."/>
            <person name="Apweiler R."/>
            <person name="Aturaliya R.N."/>
            <person name="Bailey T.L."/>
            <person name="Bansal M."/>
            <person name="Baxter L."/>
            <person name="Beisel K.W."/>
            <person name="Bersano T."/>
            <person name="Bono H."/>
            <person name="Chalk A.M."/>
            <person name="Chiu K.P."/>
            <person name="Choudhary V."/>
            <person name="Christoffels A."/>
            <person name="Clutterbuck D.R."/>
            <person name="Crowe M.L."/>
            <person name="Dalla E."/>
            <person name="Dalrymple B.P."/>
            <person name="de Bono B."/>
            <person name="Della Gatta G."/>
            <person name="di Bernardo D."/>
            <person name="Down T."/>
            <person name="Engstrom P."/>
            <person name="Fagiolini M."/>
            <person name="Faulkner G."/>
            <person name="Fletcher C.F."/>
            <person name="Fukushima T."/>
            <person name="Furuno M."/>
            <person name="Futaki S."/>
            <person name="Gariboldi M."/>
            <person name="Georgii-Hemming P."/>
            <person name="Gingeras T.R."/>
            <person name="Gojobori T."/>
            <person name="Green R.E."/>
            <person name="Gustincich S."/>
            <person name="Harbers M."/>
            <person name="Hayashi Y."/>
            <person name="Hensch T.K."/>
            <person name="Hirokawa N."/>
            <person name="Hill D."/>
            <person name="Huminiecki L."/>
            <person name="Iacono M."/>
            <person name="Ikeo K."/>
            <person name="Iwama A."/>
            <person name="Ishikawa T."/>
            <person name="Jakt M."/>
            <person name="Kanapin A."/>
            <person name="Katoh M."/>
            <person name="Kawasawa Y."/>
            <person name="Kelso J."/>
            <person name="Kitamura H."/>
            <person name="Kitano H."/>
            <person name="Kollias G."/>
            <person name="Krishnan S.P."/>
            <person name="Kruger A."/>
            <person name="Kummerfeld S.K."/>
            <person name="Kurochkin I.V."/>
            <person name="Lareau L.F."/>
            <person name="Lazarevic D."/>
            <person name="Lipovich L."/>
            <person name="Liu J."/>
            <person name="Liuni S."/>
            <person name="McWilliam S."/>
            <person name="Madan Babu M."/>
            <person name="Madera M."/>
            <person name="Marchionni L."/>
            <person name="Matsuda H."/>
            <person name="Matsuzawa S."/>
            <person name="Miki H."/>
            <person name="Mignone F."/>
            <person name="Miyake S."/>
            <person name="Morris K."/>
            <person name="Mottagui-Tabar S."/>
            <person name="Mulder N."/>
            <person name="Nakano N."/>
            <person name="Nakauchi H."/>
            <person name="Ng P."/>
            <person name="Nilsson R."/>
            <person name="Nishiguchi S."/>
            <person name="Nishikawa S."/>
            <person name="Nori F."/>
            <person name="Ohara O."/>
            <person name="Okazaki Y."/>
            <person name="Orlando V."/>
            <person name="Pang K.C."/>
            <person name="Pavan W.J."/>
            <person name="Pavesi G."/>
            <person name="Pesole G."/>
            <person name="Petrovsky N."/>
            <person name="Piazza S."/>
            <person name="Reed J."/>
            <person name="Reid J.F."/>
            <person name="Ring B.Z."/>
            <person name="Ringwald M."/>
            <person name="Rost B."/>
            <person name="Ruan Y."/>
            <person name="Salzberg S.L."/>
            <person name="Sandelin A."/>
            <person name="Schneider C."/>
            <person name="Schoenbach C."/>
            <person name="Sekiguchi K."/>
            <person name="Semple C.A."/>
            <person name="Seno S."/>
            <person name="Sessa L."/>
            <person name="Sheng Y."/>
            <person name="Shibata Y."/>
            <person name="Shimada H."/>
            <person name="Shimada K."/>
            <person name="Silva D."/>
            <person name="Sinclair B."/>
            <person name="Sperling S."/>
            <person name="Stupka E."/>
            <person name="Sugiura K."/>
            <person name="Sultana R."/>
            <person name="Takenaka Y."/>
            <person name="Taki K."/>
            <person name="Tammoja K."/>
            <person name="Tan S.L."/>
            <person name="Tang S."/>
            <person name="Taylor M.S."/>
            <person name="Tegner J."/>
            <person name="Teichmann S.A."/>
            <person name="Ueda H.R."/>
            <person name="van Nimwegen E."/>
            <person name="Verardo R."/>
            <person name="Wei C.L."/>
            <person name="Yagi K."/>
            <person name="Yamanishi H."/>
            <person name="Zabarovsky E."/>
            <person name="Zhu S."/>
            <person name="Zimmer A."/>
            <person name="Hide W."/>
            <person name="Bult C."/>
            <person name="Grimmond S.M."/>
            <person name="Teasdale R.D."/>
            <person name="Liu E.T."/>
            <person name="Brusic V."/>
            <person name="Quackenbush J."/>
            <person name="Wahlestedt C."/>
            <person name="Mattick J.S."/>
            <person name="Hume D.A."/>
            <person name="Kai C."/>
            <person name="Sasaki D."/>
            <person name="Tomaru Y."/>
            <person name="Fukuda S."/>
            <person name="Kanamori-Katayama M."/>
            <person name="Suzuki M."/>
            <person name="Aoki J."/>
            <person name="Arakawa T."/>
            <person name="Iida J."/>
            <person name="Imamura K."/>
            <person name="Itoh M."/>
            <person name="Kato T."/>
            <person name="Kawaji H."/>
            <person name="Kawagashira N."/>
            <person name="Kawashima T."/>
            <person name="Kojima M."/>
            <person name="Kondo S."/>
            <person name="Konno H."/>
            <person name="Nakano K."/>
            <person name="Ninomiya N."/>
            <person name="Nishio T."/>
            <person name="Okada M."/>
            <person name="Plessy C."/>
            <person name="Shibata K."/>
            <person name="Shiraki T."/>
            <person name="Suzuki S."/>
            <person name="Tagami M."/>
            <person name="Waki K."/>
            <person name="Watahiki A."/>
            <person name="Okamura-Oho Y."/>
            <person name="Suzuki H."/>
            <person name="Kawai J."/>
            <person name="Hayashizaki Y."/>
        </authorList>
    </citation>
    <scope>NUCLEOTIDE SEQUENCE [LARGE SCALE MRNA]</scope>
    <source>
        <strain>C57BL/6J</strain>
        <tissue>Pancreas</tissue>
        <tissue>Spinal ganglion</tissue>
    </source>
</reference>
<sequence>MALCLKQVFAKDKTFRPRKRFEPGTQRFELYKKAQASLKSGLDLRSVVRLPPGESIDDWIAVHVVDFFNRINLIYGTMAEHCSESSCPVMAGGPRYEYRWQDERQYRRPAKLSAPRYMALLMDWIEGLINDEDVFPTRVGVPFPKNFQQVCTKILTRLFRVFVHVYIHHFDSILSMGAEAHVNTCYKHFYYFIQEFSLVDQRELEPLREMTERICH</sequence>
<feature type="chain" id="PRO_0000193575" description="MOB kinase activator 3C">
    <location>
        <begin position="1"/>
        <end position="216"/>
    </location>
</feature>
<feature type="binding site" evidence="1">
    <location>
        <position position="82"/>
    </location>
    <ligand>
        <name>Zn(2+)</name>
        <dbReference type="ChEBI" id="CHEBI:29105"/>
    </ligand>
</feature>
<feature type="binding site" evidence="1">
    <location>
        <position position="87"/>
    </location>
    <ligand>
        <name>Zn(2+)</name>
        <dbReference type="ChEBI" id="CHEBI:29105"/>
    </ligand>
</feature>
<feature type="binding site" evidence="1">
    <location>
        <position position="164"/>
    </location>
    <ligand>
        <name>Zn(2+)</name>
        <dbReference type="ChEBI" id="CHEBI:29105"/>
    </ligand>
</feature>
<feature type="binding site" evidence="1">
    <location>
        <position position="169"/>
    </location>
    <ligand>
        <name>Zn(2+)</name>
        <dbReference type="ChEBI" id="CHEBI:29105"/>
    </ligand>
</feature>
<name>MOB3C_MOUSE</name>
<gene>
    <name type="primary">Mob3c</name>
    <name type="synonym">Mobkl2c</name>
</gene>
<organism>
    <name type="scientific">Mus musculus</name>
    <name type="common">Mouse</name>
    <dbReference type="NCBI Taxonomy" id="10090"/>
    <lineage>
        <taxon>Eukaryota</taxon>
        <taxon>Metazoa</taxon>
        <taxon>Chordata</taxon>
        <taxon>Craniata</taxon>
        <taxon>Vertebrata</taxon>
        <taxon>Euteleostomi</taxon>
        <taxon>Mammalia</taxon>
        <taxon>Eutheria</taxon>
        <taxon>Euarchontoglires</taxon>
        <taxon>Glires</taxon>
        <taxon>Rodentia</taxon>
        <taxon>Myomorpha</taxon>
        <taxon>Muroidea</taxon>
        <taxon>Muridae</taxon>
        <taxon>Murinae</taxon>
        <taxon>Mus</taxon>
        <taxon>Mus</taxon>
    </lineage>
</organism>
<dbReference type="EMBL" id="AK084014">
    <property type="protein sequence ID" value="BAC39097.1"/>
    <property type="molecule type" value="mRNA"/>
</dbReference>
<dbReference type="EMBL" id="AK148476">
    <property type="protein sequence ID" value="BAE28575.1"/>
    <property type="molecule type" value="mRNA"/>
</dbReference>
<dbReference type="CCDS" id="CCDS18497.1"/>
<dbReference type="RefSeq" id="NP_780517.1">
    <property type="nucleotide sequence ID" value="NM_175308.5"/>
</dbReference>
<dbReference type="RefSeq" id="XP_011238683.1">
    <property type="nucleotide sequence ID" value="XM_011240381.2"/>
</dbReference>
<dbReference type="RefSeq" id="XP_011238684.1">
    <property type="nucleotide sequence ID" value="XM_011240382.3"/>
</dbReference>
<dbReference type="RefSeq" id="XP_036019447.1">
    <property type="nucleotide sequence ID" value="XM_036163554.1"/>
</dbReference>
<dbReference type="SMR" id="Q8BJG4"/>
<dbReference type="FunCoup" id="Q8BJG4">
    <property type="interactions" value="1463"/>
</dbReference>
<dbReference type="STRING" id="10090.ENSMUSP00000030477"/>
<dbReference type="iPTMnet" id="Q8BJG4"/>
<dbReference type="PhosphoSitePlus" id="Q8BJG4"/>
<dbReference type="PaxDb" id="10090-ENSMUSP00000030477"/>
<dbReference type="ProteomicsDB" id="291377"/>
<dbReference type="Antibodypedia" id="32815">
    <property type="antibodies" value="93 antibodies from 21 providers"/>
</dbReference>
<dbReference type="DNASU" id="100465"/>
<dbReference type="Ensembl" id="ENSMUST00000030477.4">
    <property type="protein sequence ID" value="ENSMUSP00000030477.4"/>
    <property type="gene ID" value="ENSMUSG00000028709.4"/>
</dbReference>
<dbReference type="GeneID" id="100465"/>
<dbReference type="KEGG" id="mmu:100465"/>
<dbReference type="UCSC" id="uc008ufk.1">
    <property type="organism name" value="mouse"/>
</dbReference>
<dbReference type="AGR" id="MGI:2140623"/>
<dbReference type="CTD" id="148932"/>
<dbReference type="MGI" id="MGI:2140623">
    <property type="gene designation" value="Mob3c"/>
</dbReference>
<dbReference type="VEuPathDB" id="HostDB:ENSMUSG00000028709"/>
<dbReference type="eggNOG" id="KOG1903">
    <property type="taxonomic scope" value="Eukaryota"/>
</dbReference>
<dbReference type="GeneTree" id="ENSGT01120000271863"/>
<dbReference type="HOGENOM" id="CLU_038321_3_0_1"/>
<dbReference type="InParanoid" id="Q8BJG4"/>
<dbReference type="OMA" id="AEHCSET"/>
<dbReference type="OrthoDB" id="8170117at2759"/>
<dbReference type="PhylomeDB" id="Q8BJG4"/>
<dbReference type="TreeFam" id="TF300789"/>
<dbReference type="BioGRID-ORCS" id="100465">
    <property type="hits" value="2 hits in 79 CRISPR screens"/>
</dbReference>
<dbReference type="ChiTaRS" id="Mob3c">
    <property type="organism name" value="mouse"/>
</dbReference>
<dbReference type="PRO" id="PR:Q8BJG4"/>
<dbReference type="Proteomes" id="UP000000589">
    <property type="component" value="Chromosome 4"/>
</dbReference>
<dbReference type="RNAct" id="Q8BJG4">
    <property type="molecule type" value="protein"/>
</dbReference>
<dbReference type="Bgee" id="ENSMUSG00000028709">
    <property type="expression patterns" value="Expressed in interventricular septum and 151 other cell types or tissues"/>
</dbReference>
<dbReference type="ExpressionAtlas" id="Q8BJG4">
    <property type="expression patterns" value="baseline and differential"/>
</dbReference>
<dbReference type="GO" id="GO:0046872">
    <property type="term" value="F:metal ion binding"/>
    <property type="evidence" value="ECO:0007669"/>
    <property type="project" value="UniProtKB-KW"/>
</dbReference>
<dbReference type="FunFam" id="1.20.140.30:FF:000001">
    <property type="entry name" value="MOB kinase activator 1A"/>
    <property type="match status" value="1"/>
</dbReference>
<dbReference type="Gene3D" id="1.20.140.30">
    <property type="entry name" value="MOB kinase activator"/>
    <property type="match status" value="1"/>
</dbReference>
<dbReference type="InterPro" id="IPR005301">
    <property type="entry name" value="MOB_kinase_act_fam"/>
</dbReference>
<dbReference type="InterPro" id="IPR036703">
    <property type="entry name" value="MOB_kinase_act_sf"/>
</dbReference>
<dbReference type="PANTHER" id="PTHR22599">
    <property type="entry name" value="MPS ONE BINDER KINASE ACTIVATOR-LIKE MOB"/>
    <property type="match status" value="1"/>
</dbReference>
<dbReference type="Pfam" id="PF03637">
    <property type="entry name" value="Mob1_phocein"/>
    <property type="match status" value="1"/>
</dbReference>
<dbReference type="SMART" id="SM01388">
    <property type="entry name" value="Mob1_phocein"/>
    <property type="match status" value="1"/>
</dbReference>
<dbReference type="SUPFAM" id="SSF101152">
    <property type="entry name" value="Mob1/phocein"/>
    <property type="match status" value="1"/>
</dbReference>
<protein>
    <recommendedName>
        <fullName>MOB kinase activator 3C</fullName>
    </recommendedName>
    <alternativeName>
        <fullName>Mob1 homolog 2C</fullName>
    </alternativeName>
    <alternativeName>
        <fullName>Mps one binder kinase activator-like 2C</fullName>
    </alternativeName>
</protein>